<organism>
    <name type="scientific">Centruroides limpidus</name>
    <name type="common">Mexican scorpion</name>
    <dbReference type="NCBI Taxonomy" id="6876"/>
    <lineage>
        <taxon>Eukaryota</taxon>
        <taxon>Metazoa</taxon>
        <taxon>Ecdysozoa</taxon>
        <taxon>Arthropoda</taxon>
        <taxon>Chelicerata</taxon>
        <taxon>Arachnida</taxon>
        <taxon>Scorpiones</taxon>
        <taxon>Buthida</taxon>
        <taxon>Buthoidea</taxon>
        <taxon>Buthidae</taxon>
        <taxon>Centruroides</taxon>
    </lineage>
</organism>
<reference key="1">
    <citation type="journal article" date="2003" name="Biochim. Biophys. Acta">
        <title>A novel class of peptide found in scorpion venom with neurodepressant effects in peripheral and central nervous system of the rat.</title>
        <authorList>
            <person name="Corona M."/>
            <person name="Coronas F.V."/>
            <person name="Merino E."/>
            <person name="Becerril B."/>
            <person name="Gutierrez R."/>
            <person name="Rebolledo-Antunez S."/>
            <person name="Garcia D.E."/>
            <person name="Possani L.D."/>
        </authorList>
    </citation>
    <scope>NUCLEOTIDE SEQUENCE [GENOMIC DNA]</scope>
    <scope>PROTEIN SEQUENCE OF 20-82</scope>
    <scope>MASS SPECTROMETRY</scope>
    <scope>FUNCTION</scope>
    <source>
        <tissue>Venom gland</tissue>
    </source>
</reference>
<accession>Q8WRY4</accession>
<evidence type="ECO:0000250" key="1"/>
<evidence type="ECO:0000255" key="2">
    <source>
        <dbReference type="PROSITE-ProRule" id="PRU01210"/>
    </source>
</evidence>
<evidence type="ECO:0000269" key="3">
    <source>
    </source>
</evidence>
<evidence type="ECO:0000305" key="4"/>
<protein>
    <recommendedName>
        <fullName>Toxin Cll9</fullName>
    </recommendedName>
</protein>
<name>SCX9_CENLI</name>
<comment type="function">
    <text evidence="1 3">Beta toxins bind voltage-independently at site-4 of sodium channels (Nav) and shift the voltage of activation toward more negative potentials thereby affecting sodium channel activation and promoting spontaneous and repetitive firing (By similarity). Has some action on peripheral ganglia, but not on other sodium channels such as those from cerebellum granular cells in culture. Induces sleep, suggesting a strong antiepileptic action.</text>
</comment>
<comment type="subcellular location">
    <subcellularLocation>
        <location>Secreted</location>
    </subcellularLocation>
</comment>
<comment type="tissue specificity">
    <text>Expressed by the venom gland.</text>
</comment>
<comment type="domain">
    <text evidence="4">Has the structural arrangement of an alpha-helix connected to antiparallel beta-sheets by disulfide bonds (CS-alpha/beta).</text>
</comment>
<comment type="mass spectrometry"/>
<comment type="similarity">
    <text evidence="4">Belongs to the long (4 C-C) scorpion toxin superfamily. Sodium channel inhibitor family. Beta subfamily.</text>
</comment>
<proteinExistence type="evidence at protein level"/>
<feature type="signal peptide" evidence="3">
    <location>
        <begin position="1"/>
        <end position="19"/>
    </location>
</feature>
<feature type="chain" id="PRO_0000035278" description="Toxin Cll9">
    <location>
        <begin position="20"/>
        <end position="82"/>
    </location>
</feature>
<feature type="domain" description="LCN-type CS-alpha/beta" evidence="2">
    <location>
        <begin position="20"/>
        <end position="83"/>
    </location>
</feature>
<feature type="disulfide bond" evidence="2">
    <location>
        <begin position="31"/>
        <end position="82"/>
    </location>
</feature>
<feature type="disulfide bond" evidence="2">
    <location>
        <begin position="35"/>
        <end position="58"/>
    </location>
</feature>
<feature type="disulfide bond" evidence="2">
    <location>
        <begin position="44"/>
        <end position="63"/>
    </location>
</feature>
<feature type="disulfide bond" evidence="2">
    <location>
        <begin position="48"/>
        <end position="65"/>
    </location>
</feature>
<keyword id="KW-0165">Cleavage on pair of basic residues</keyword>
<keyword id="KW-0903">Direct protein sequencing</keyword>
<keyword id="KW-1015">Disulfide bond</keyword>
<keyword id="KW-0872">Ion channel impairing toxin</keyword>
<keyword id="KW-0528">Neurotoxin</keyword>
<keyword id="KW-0964">Secreted</keyword>
<keyword id="KW-0732">Signal</keyword>
<keyword id="KW-0800">Toxin</keyword>
<keyword id="KW-0738">Voltage-gated sodium channel impairing toxin</keyword>
<sequence>MNSLLMITACLILIGTVWAEDGYLFDKRKRCTLACIDKTGDKNCDRNCKKEGGSFGHCSYSACWCKGLPGSTPISRTPGKTCKK</sequence>
<dbReference type="EMBL" id="AF387171">
    <property type="protein sequence ID" value="AAL57291.1"/>
    <property type="molecule type" value="Genomic_DNA"/>
</dbReference>
<dbReference type="SMR" id="Q8WRY4"/>
<dbReference type="GO" id="GO:0005576">
    <property type="term" value="C:extracellular region"/>
    <property type="evidence" value="ECO:0007669"/>
    <property type="project" value="UniProtKB-SubCell"/>
</dbReference>
<dbReference type="GO" id="GO:0019871">
    <property type="term" value="F:sodium channel inhibitor activity"/>
    <property type="evidence" value="ECO:0007669"/>
    <property type="project" value="InterPro"/>
</dbReference>
<dbReference type="GO" id="GO:0090729">
    <property type="term" value="F:toxin activity"/>
    <property type="evidence" value="ECO:0007669"/>
    <property type="project" value="UniProtKB-KW"/>
</dbReference>
<dbReference type="CDD" id="cd23106">
    <property type="entry name" value="neurotoxins_LC_scorpion"/>
    <property type="match status" value="1"/>
</dbReference>
<dbReference type="Gene3D" id="3.30.30.10">
    <property type="entry name" value="Knottin, scorpion toxin-like"/>
    <property type="match status" value="1"/>
</dbReference>
<dbReference type="InterPro" id="IPR044062">
    <property type="entry name" value="LCN-type_CS_alpha_beta_dom"/>
</dbReference>
<dbReference type="InterPro" id="IPR036574">
    <property type="entry name" value="Scorpion_toxin-like_sf"/>
</dbReference>
<dbReference type="InterPro" id="IPR018218">
    <property type="entry name" value="Scorpion_toxinL"/>
</dbReference>
<dbReference type="InterPro" id="IPR002061">
    <property type="entry name" value="Scorpion_toxinL/defensin"/>
</dbReference>
<dbReference type="Pfam" id="PF00537">
    <property type="entry name" value="Toxin_3"/>
    <property type="match status" value="1"/>
</dbReference>
<dbReference type="PRINTS" id="PR00285">
    <property type="entry name" value="SCORPNTOXIN"/>
</dbReference>
<dbReference type="SUPFAM" id="SSF57095">
    <property type="entry name" value="Scorpion toxin-like"/>
    <property type="match status" value="1"/>
</dbReference>
<dbReference type="PROSITE" id="PS51863">
    <property type="entry name" value="LCN_CSAB"/>
    <property type="match status" value="1"/>
</dbReference>